<dbReference type="EC" id="7.4.2.8" evidence="1"/>
<dbReference type="EMBL" id="CP000111">
    <property type="protein sequence ID" value="ABB50793.1"/>
    <property type="molecule type" value="Genomic_DNA"/>
</dbReference>
<dbReference type="RefSeq" id="WP_011377274.1">
    <property type="nucleotide sequence ID" value="NC_007577.1"/>
</dbReference>
<dbReference type="SMR" id="Q318A2"/>
<dbReference type="STRING" id="74546.PMT9312_1732"/>
<dbReference type="KEGG" id="pmi:PMT9312_1732"/>
<dbReference type="eggNOG" id="COG0653">
    <property type="taxonomic scope" value="Bacteria"/>
</dbReference>
<dbReference type="HOGENOM" id="CLU_005314_3_0_3"/>
<dbReference type="Proteomes" id="UP000002715">
    <property type="component" value="Chromosome"/>
</dbReference>
<dbReference type="GO" id="GO:0031522">
    <property type="term" value="C:cell envelope Sec protein transport complex"/>
    <property type="evidence" value="ECO:0007669"/>
    <property type="project" value="TreeGrafter"/>
</dbReference>
<dbReference type="GO" id="GO:0005829">
    <property type="term" value="C:cytosol"/>
    <property type="evidence" value="ECO:0007669"/>
    <property type="project" value="TreeGrafter"/>
</dbReference>
<dbReference type="GO" id="GO:0031676">
    <property type="term" value="C:plasma membrane-derived thylakoid membrane"/>
    <property type="evidence" value="ECO:0007669"/>
    <property type="project" value="UniProtKB-SubCell"/>
</dbReference>
<dbReference type="GO" id="GO:0005524">
    <property type="term" value="F:ATP binding"/>
    <property type="evidence" value="ECO:0007669"/>
    <property type="project" value="UniProtKB-UniRule"/>
</dbReference>
<dbReference type="GO" id="GO:0008564">
    <property type="term" value="F:protein-exporting ATPase activity"/>
    <property type="evidence" value="ECO:0007669"/>
    <property type="project" value="UniProtKB-EC"/>
</dbReference>
<dbReference type="GO" id="GO:0065002">
    <property type="term" value="P:intracellular protein transmembrane transport"/>
    <property type="evidence" value="ECO:0007669"/>
    <property type="project" value="UniProtKB-UniRule"/>
</dbReference>
<dbReference type="GO" id="GO:0017038">
    <property type="term" value="P:protein import"/>
    <property type="evidence" value="ECO:0007669"/>
    <property type="project" value="InterPro"/>
</dbReference>
<dbReference type="GO" id="GO:0006605">
    <property type="term" value="P:protein targeting"/>
    <property type="evidence" value="ECO:0007669"/>
    <property type="project" value="UniProtKB-UniRule"/>
</dbReference>
<dbReference type="GO" id="GO:0043952">
    <property type="term" value="P:protein transport by the Sec complex"/>
    <property type="evidence" value="ECO:0007669"/>
    <property type="project" value="TreeGrafter"/>
</dbReference>
<dbReference type="CDD" id="cd17928">
    <property type="entry name" value="DEXDc_SecA"/>
    <property type="match status" value="1"/>
</dbReference>
<dbReference type="CDD" id="cd18803">
    <property type="entry name" value="SF2_C_secA"/>
    <property type="match status" value="1"/>
</dbReference>
<dbReference type="FunFam" id="3.90.1440.10:FF:000003">
    <property type="entry name" value="Preprotein translocase SecA subunit"/>
    <property type="match status" value="1"/>
</dbReference>
<dbReference type="FunFam" id="3.40.50.300:FF:000429">
    <property type="entry name" value="Preprotein translocase subunit SecA"/>
    <property type="match status" value="1"/>
</dbReference>
<dbReference type="FunFam" id="1.10.3060.10:FF:000003">
    <property type="entry name" value="Protein translocase subunit SecA"/>
    <property type="match status" value="1"/>
</dbReference>
<dbReference type="FunFam" id="3.40.50.300:FF:000334">
    <property type="entry name" value="Protein translocase subunit SecA"/>
    <property type="match status" value="1"/>
</dbReference>
<dbReference type="Gene3D" id="1.10.3060.10">
    <property type="entry name" value="Helical scaffold and wing domains of SecA"/>
    <property type="match status" value="1"/>
</dbReference>
<dbReference type="Gene3D" id="3.40.50.300">
    <property type="entry name" value="P-loop containing nucleotide triphosphate hydrolases"/>
    <property type="match status" value="2"/>
</dbReference>
<dbReference type="Gene3D" id="3.90.1440.10">
    <property type="entry name" value="SecA, preprotein cross-linking domain"/>
    <property type="match status" value="1"/>
</dbReference>
<dbReference type="HAMAP" id="MF_01382">
    <property type="entry name" value="SecA"/>
    <property type="match status" value="1"/>
</dbReference>
<dbReference type="InterPro" id="IPR014001">
    <property type="entry name" value="Helicase_ATP-bd"/>
</dbReference>
<dbReference type="InterPro" id="IPR027417">
    <property type="entry name" value="P-loop_NTPase"/>
</dbReference>
<dbReference type="InterPro" id="IPR000185">
    <property type="entry name" value="SecA"/>
</dbReference>
<dbReference type="InterPro" id="IPR020937">
    <property type="entry name" value="SecA_CS"/>
</dbReference>
<dbReference type="InterPro" id="IPR011115">
    <property type="entry name" value="SecA_DEAD"/>
</dbReference>
<dbReference type="InterPro" id="IPR014018">
    <property type="entry name" value="SecA_motor_DEAD"/>
</dbReference>
<dbReference type="InterPro" id="IPR011130">
    <property type="entry name" value="SecA_preprotein_X-link_dom"/>
</dbReference>
<dbReference type="InterPro" id="IPR044722">
    <property type="entry name" value="SecA_SF2_C"/>
</dbReference>
<dbReference type="InterPro" id="IPR011116">
    <property type="entry name" value="SecA_Wing/Scaffold"/>
</dbReference>
<dbReference type="InterPro" id="IPR036266">
    <property type="entry name" value="SecA_Wing/Scaffold_sf"/>
</dbReference>
<dbReference type="InterPro" id="IPR036670">
    <property type="entry name" value="SecA_X-link_sf"/>
</dbReference>
<dbReference type="NCBIfam" id="TIGR00963">
    <property type="entry name" value="secA"/>
    <property type="match status" value="1"/>
</dbReference>
<dbReference type="PANTHER" id="PTHR30612:SF0">
    <property type="entry name" value="CHLOROPLAST PROTEIN-TRANSPORTING ATPASE"/>
    <property type="match status" value="1"/>
</dbReference>
<dbReference type="PANTHER" id="PTHR30612">
    <property type="entry name" value="SECA INNER MEMBRANE COMPONENT OF SEC PROTEIN SECRETION SYSTEM"/>
    <property type="match status" value="1"/>
</dbReference>
<dbReference type="Pfam" id="PF21090">
    <property type="entry name" value="P-loop_SecA"/>
    <property type="match status" value="1"/>
</dbReference>
<dbReference type="Pfam" id="PF07517">
    <property type="entry name" value="SecA_DEAD"/>
    <property type="match status" value="1"/>
</dbReference>
<dbReference type="Pfam" id="PF01043">
    <property type="entry name" value="SecA_PP_bind"/>
    <property type="match status" value="1"/>
</dbReference>
<dbReference type="Pfam" id="PF07516">
    <property type="entry name" value="SecA_SW"/>
    <property type="match status" value="1"/>
</dbReference>
<dbReference type="PRINTS" id="PR00906">
    <property type="entry name" value="SECA"/>
</dbReference>
<dbReference type="SMART" id="SM00957">
    <property type="entry name" value="SecA_DEAD"/>
    <property type="match status" value="1"/>
</dbReference>
<dbReference type="SMART" id="SM00958">
    <property type="entry name" value="SecA_PP_bind"/>
    <property type="match status" value="1"/>
</dbReference>
<dbReference type="SUPFAM" id="SSF81886">
    <property type="entry name" value="Helical scaffold and wing domains of SecA"/>
    <property type="match status" value="1"/>
</dbReference>
<dbReference type="SUPFAM" id="SSF52540">
    <property type="entry name" value="P-loop containing nucleoside triphosphate hydrolases"/>
    <property type="match status" value="2"/>
</dbReference>
<dbReference type="SUPFAM" id="SSF81767">
    <property type="entry name" value="Pre-protein crosslinking domain of SecA"/>
    <property type="match status" value="1"/>
</dbReference>
<dbReference type="PROSITE" id="PS01312">
    <property type="entry name" value="SECA"/>
    <property type="match status" value="1"/>
</dbReference>
<dbReference type="PROSITE" id="PS51196">
    <property type="entry name" value="SECA_MOTOR_DEAD"/>
    <property type="match status" value="1"/>
</dbReference>
<gene>
    <name evidence="1" type="primary">secA</name>
    <name type="ordered locus">PMT9312_1732</name>
</gene>
<reference key="1">
    <citation type="journal article" date="2006" name="Science">
        <title>Genomic islands and the ecology and evolution of Prochlorococcus.</title>
        <authorList>
            <person name="Coleman M.L."/>
            <person name="Sullivan M.B."/>
            <person name="Martiny A.C."/>
            <person name="Steglich C."/>
            <person name="Barry K."/>
            <person name="Delong E.F."/>
            <person name="Chisholm S.W."/>
        </authorList>
    </citation>
    <scope>NUCLEOTIDE SEQUENCE [LARGE SCALE GENOMIC DNA]</scope>
    <source>
        <strain>MIT 9312</strain>
    </source>
</reference>
<evidence type="ECO:0000255" key="1">
    <source>
        <dbReference type="HAMAP-Rule" id="MF_01382"/>
    </source>
</evidence>
<evidence type="ECO:0000256" key="2">
    <source>
        <dbReference type="SAM" id="MobiDB-lite"/>
    </source>
</evidence>
<feature type="chain" id="PRO_0000318408" description="Protein translocase subunit SecA">
    <location>
        <begin position="1"/>
        <end position="943"/>
    </location>
</feature>
<feature type="region of interest" description="Disordered" evidence="2">
    <location>
        <begin position="535"/>
        <end position="560"/>
    </location>
</feature>
<feature type="compositionally biased region" description="Low complexity" evidence="2">
    <location>
        <begin position="551"/>
        <end position="560"/>
    </location>
</feature>
<feature type="binding site" evidence="1">
    <location>
        <position position="90"/>
    </location>
    <ligand>
        <name>ATP</name>
        <dbReference type="ChEBI" id="CHEBI:30616"/>
    </ligand>
</feature>
<feature type="binding site" evidence="1">
    <location>
        <begin position="108"/>
        <end position="112"/>
    </location>
    <ligand>
        <name>ATP</name>
        <dbReference type="ChEBI" id="CHEBI:30616"/>
    </ligand>
</feature>
<feature type="binding site" evidence="1">
    <location>
        <position position="509"/>
    </location>
    <ligand>
        <name>ATP</name>
        <dbReference type="ChEBI" id="CHEBI:30616"/>
    </ligand>
</feature>
<proteinExistence type="inferred from homology"/>
<name>SECA_PROM9</name>
<comment type="function">
    <text evidence="1">Part of the Sec protein translocase complex. Interacts with the SecYEG preprotein conducting channel. Has a central role in coupling the hydrolysis of ATP to the transfer of proteins into and across the cell membrane, serving as an ATP-driven molecular motor driving the stepwise translocation of polypeptide chains across the membrane.</text>
</comment>
<comment type="function">
    <text evidence="1">Probably participates in protein translocation into and across both the cytoplasmic and thylakoid membranes in cyanobacterial cells.</text>
</comment>
<comment type="catalytic activity">
    <reaction evidence="1">
        <text>ATP + H2O + cellular proteinSide 1 = ADP + phosphate + cellular proteinSide 2.</text>
        <dbReference type="EC" id="7.4.2.8"/>
    </reaction>
</comment>
<comment type="subunit">
    <text evidence="1">Monomer and homodimer. Part of the essential Sec protein translocation apparatus which comprises SecA, SecYEG and auxiliary proteins SecDF. Other proteins may also be involved.</text>
</comment>
<comment type="subcellular location">
    <subcellularLocation>
        <location evidence="1">Cell inner membrane</location>
        <topology evidence="1">Peripheral membrane protein</topology>
        <orientation evidence="1">Cytoplasmic side</orientation>
    </subcellularLocation>
    <subcellularLocation>
        <location evidence="1">Cellular thylakoid membrane</location>
        <topology evidence="1">Peripheral membrane protein</topology>
        <orientation evidence="1">Cytoplasmic side</orientation>
    </subcellularLocation>
    <subcellularLocation>
        <location evidence="1">Cytoplasm</location>
    </subcellularLocation>
</comment>
<comment type="similarity">
    <text evidence="1">Belongs to the SecA family.</text>
</comment>
<protein>
    <recommendedName>
        <fullName evidence="1">Protein translocase subunit SecA</fullName>
        <ecNumber evidence="1">7.4.2.8</ecNumber>
    </recommendedName>
</protein>
<organism>
    <name type="scientific">Prochlorococcus marinus (strain MIT 9312)</name>
    <dbReference type="NCBI Taxonomy" id="74546"/>
    <lineage>
        <taxon>Bacteria</taxon>
        <taxon>Bacillati</taxon>
        <taxon>Cyanobacteriota</taxon>
        <taxon>Cyanophyceae</taxon>
        <taxon>Synechococcales</taxon>
        <taxon>Prochlorococcaceae</taxon>
        <taxon>Prochlorococcus</taxon>
    </lineage>
</organism>
<keyword id="KW-0067">ATP-binding</keyword>
<keyword id="KW-0997">Cell inner membrane</keyword>
<keyword id="KW-1003">Cell membrane</keyword>
<keyword id="KW-0963">Cytoplasm</keyword>
<keyword id="KW-0472">Membrane</keyword>
<keyword id="KW-0547">Nucleotide-binding</keyword>
<keyword id="KW-0653">Protein transport</keyword>
<keyword id="KW-0793">Thylakoid</keyword>
<keyword id="KW-1278">Translocase</keyword>
<keyword id="KW-0811">Translocation</keyword>
<keyword id="KW-0813">Transport</keyword>
<accession>Q318A2</accession>
<sequence>MLKLLLGDPNTRKLKRYQPIVEEINFLEEEISKLTDDELRQETHNLKSQISSESDIKQQKELLDESLPKAFAIVREASKRVLDMRHFDVQLIGGMVLHECQIAEMKTGEGKTLVATLPCYLNALTGKGVHVVTVNDYLARRDAEWMGQVHRFLGLSVGLIQQDMSPVQRKKNYDCDITYATNSELGFDYLRDNMSTDINEVVQRPFNYCVIDEVDSILIDEARTPLIISGQVERPQEKYQKASELALALVKAKEIGKDGIDPEGDYEVDEKQRSCILTDQGFAKCEEYLAVSDLYNPKDPWAHYITNALKAKELFIKDVNYIIKNNEAVIVDEFTGRVMPGRRWSDGQHQAIEAKESLKIQPETQTLASITYQNFFLLYPGLAGMTGTAKTEEVEFEKTYKLESTVIPTNQIRKREDLPDQVFKTEIGKWKAVARETAQIHRAGRPVLVGTTSVEKSELLSSLLAEEKIPHNLLNAKPENVEREAEIVAQAGRAGAVTIATNMAGRGTDIILGGNSDYMARLKLKEILIPLLVKPNNEHKPPIPKQRSSKSKGGFSSKVGSNLTKNIPDYSTSLFPCKLDEEIQKKLSVLSDELVKNWGDRQLSVLDLDDRIATAAEKAPTEDKMIKLLRESLSRVKDEYEKVLTHEEKKVREVGGLHVIGTERHESRRVDNQLRGRAGRQGDFGSTRFFLSLEDNLLRIFGGERVANLMNAFRVDEDMPIESGMLTRSLESAQKKVETYYYDIRKQVFEYDEVMNNQRKAVYSERLRVLQGTDLKRQVIGYGERTMYEIVEAYINPDLPPEEWDIAQLISKVKEFIYLLDDLKADDVKLLSIEELKNYLQEQLRTAYDLKESQIEQIRPGLMREAERFFILQQIDNLWREHLQSMDSLRESVGLRGYGQKDPLIEYKNEGYDMFLEMMTNMRRNVIYSMFMFQPKTDKDDKN</sequence>